<proteinExistence type="inferred from homology"/>
<keyword id="KW-0240">DNA-directed RNA polymerase</keyword>
<keyword id="KW-0460">Magnesium</keyword>
<keyword id="KW-0479">Metal-binding</keyword>
<keyword id="KW-0548">Nucleotidyltransferase</keyword>
<keyword id="KW-0804">Transcription</keyword>
<keyword id="KW-0808">Transferase</keyword>
<keyword id="KW-0862">Zinc</keyword>
<accession>Q64NJ8</accession>
<organism>
    <name type="scientific">Bacteroides fragilis (strain YCH46)</name>
    <dbReference type="NCBI Taxonomy" id="295405"/>
    <lineage>
        <taxon>Bacteria</taxon>
        <taxon>Pseudomonadati</taxon>
        <taxon>Bacteroidota</taxon>
        <taxon>Bacteroidia</taxon>
        <taxon>Bacteroidales</taxon>
        <taxon>Bacteroidaceae</taxon>
        <taxon>Bacteroides</taxon>
    </lineage>
</organism>
<reference key="1">
    <citation type="journal article" date="2004" name="Proc. Natl. Acad. Sci. U.S.A.">
        <title>Genomic analysis of Bacteroides fragilis reveals extensive DNA inversions regulating cell surface adaptation.</title>
        <authorList>
            <person name="Kuwahara T."/>
            <person name="Yamashita A."/>
            <person name="Hirakawa H."/>
            <person name="Nakayama H."/>
            <person name="Toh H."/>
            <person name="Okada N."/>
            <person name="Kuhara S."/>
            <person name="Hattori M."/>
            <person name="Hayashi T."/>
            <person name="Ohnishi Y."/>
        </authorList>
    </citation>
    <scope>NUCLEOTIDE SEQUENCE [LARGE SCALE GENOMIC DNA]</scope>
    <source>
        <strain>YCH46</strain>
    </source>
</reference>
<dbReference type="EC" id="2.7.7.6" evidence="1"/>
<dbReference type="EMBL" id="AP006841">
    <property type="protein sequence ID" value="BAD50934.1"/>
    <property type="molecule type" value="Genomic_DNA"/>
</dbReference>
<dbReference type="RefSeq" id="WP_005804126.1">
    <property type="nucleotide sequence ID" value="NZ_UYXF01000007.1"/>
</dbReference>
<dbReference type="RefSeq" id="YP_101468.1">
    <property type="nucleotide sequence ID" value="NC_006347.1"/>
</dbReference>
<dbReference type="SMR" id="Q64NJ8"/>
<dbReference type="STRING" id="295405.BF4191"/>
<dbReference type="KEGG" id="bfr:BF4191"/>
<dbReference type="PATRIC" id="fig|295405.11.peg.4046"/>
<dbReference type="HOGENOM" id="CLU_000524_3_1_10"/>
<dbReference type="OrthoDB" id="9815296at2"/>
<dbReference type="Proteomes" id="UP000002197">
    <property type="component" value="Chromosome"/>
</dbReference>
<dbReference type="GO" id="GO:0000428">
    <property type="term" value="C:DNA-directed RNA polymerase complex"/>
    <property type="evidence" value="ECO:0007669"/>
    <property type="project" value="UniProtKB-KW"/>
</dbReference>
<dbReference type="GO" id="GO:0003677">
    <property type="term" value="F:DNA binding"/>
    <property type="evidence" value="ECO:0007669"/>
    <property type="project" value="UniProtKB-UniRule"/>
</dbReference>
<dbReference type="GO" id="GO:0003899">
    <property type="term" value="F:DNA-directed RNA polymerase activity"/>
    <property type="evidence" value="ECO:0007669"/>
    <property type="project" value="UniProtKB-UniRule"/>
</dbReference>
<dbReference type="GO" id="GO:0000287">
    <property type="term" value="F:magnesium ion binding"/>
    <property type="evidence" value="ECO:0007669"/>
    <property type="project" value="UniProtKB-UniRule"/>
</dbReference>
<dbReference type="GO" id="GO:0008270">
    <property type="term" value="F:zinc ion binding"/>
    <property type="evidence" value="ECO:0007669"/>
    <property type="project" value="UniProtKB-UniRule"/>
</dbReference>
<dbReference type="GO" id="GO:0006351">
    <property type="term" value="P:DNA-templated transcription"/>
    <property type="evidence" value="ECO:0007669"/>
    <property type="project" value="UniProtKB-UniRule"/>
</dbReference>
<dbReference type="CDD" id="cd02655">
    <property type="entry name" value="RNAP_beta'_C"/>
    <property type="match status" value="1"/>
</dbReference>
<dbReference type="CDD" id="cd01609">
    <property type="entry name" value="RNAP_beta'_N"/>
    <property type="match status" value="1"/>
</dbReference>
<dbReference type="Gene3D" id="1.10.132.30">
    <property type="match status" value="1"/>
</dbReference>
<dbReference type="Gene3D" id="1.10.150.390">
    <property type="match status" value="1"/>
</dbReference>
<dbReference type="Gene3D" id="1.10.1790.20">
    <property type="match status" value="1"/>
</dbReference>
<dbReference type="Gene3D" id="1.10.40.90">
    <property type="match status" value="1"/>
</dbReference>
<dbReference type="Gene3D" id="2.40.40.20">
    <property type="match status" value="1"/>
</dbReference>
<dbReference type="Gene3D" id="2.40.50.100">
    <property type="match status" value="3"/>
</dbReference>
<dbReference type="Gene3D" id="4.10.860.120">
    <property type="entry name" value="RNA polymerase II, clamp domain"/>
    <property type="match status" value="1"/>
</dbReference>
<dbReference type="Gene3D" id="1.10.274.100">
    <property type="entry name" value="RNA polymerase Rpb1, domain 3"/>
    <property type="match status" value="2"/>
</dbReference>
<dbReference type="HAMAP" id="MF_01322">
    <property type="entry name" value="RNApol_bact_RpoC"/>
    <property type="match status" value="1"/>
</dbReference>
<dbReference type="InterPro" id="IPR045867">
    <property type="entry name" value="DNA-dir_RpoC_beta_prime"/>
</dbReference>
<dbReference type="InterPro" id="IPR012754">
    <property type="entry name" value="DNA-dir_RpoC_beta_prime_bact"/>
</dbReference>
<dbReference type="InterPro" id="IPR000722">
    <property type="entry name" value="RNA_pol_asu"/>
</dbReference>
<dbReference type="InterPro" id="IPR006592">
    <property type="entry name" value="RNA_pol_N"/>
</dbReference>
<dbReference type="InterPro" id="IPR007080">
    <property type="entry name" value="RNA_pol_Rpb1_1"/>
</dbReference>
<dbReference type="InterPro" id="IPR007066">
    <property type="entry name" value="RNA_pol_Rpb1_3"/>
</dbReference>
<dbReference type="InterPro" id="IPR042102">
    <property type="entry name" value="RNA_pol_Rpb1_3_sf"/>
</dbReference>
<dbReference type="InterPro" id="IPR007083">
    <property type="entry name" value="RNA_pol_Rpb1_4"/>
</dbReference>
<dbReference type="InterPro" id="IPR007081">
    <property type="entry name" value="RNA_pol_Rpb1_5"/>
</dbReference>
<dbReference type="InterPro" id="IPR044893">
    <property type="entry name" value="RNA_pol_Rpb1_clamp_domain"/>
</dbReference>
<dbReference type="InterPro" id="IPR038120">
    <property type="entry name" value="Rpb1_funnel_sf"/>
</dbReference>
<dbReference type="NCBIfam" id="TIGR02386">
    <property type="entry name" value="rpoC_TIGR"/>
    <property type="match status" value="1"/>
</dbReference>
<dbReference type="PANTHER" id="PTHR19376">
    <property type="entry name" value="DNA-DIRECTED RNA POLYMERASE"/>
    <property type="match status" value="1"/>
</dbReference>
<dbReference type="PANTHER" id="PTHR19376:SF54">
    <property type="entry name" value="DNA-DIRECTED RNA POLYMERASE SUBUNIT BETA"/>
    <property type="match status" value="1"/>
</dbReference>
<dbReference type="Pfam" id="PF04997">
    <property type="entry name" value="RNA_pol_Rpb1_1"/>
    <property type="match status" value="1"/>
</dbReference>
<dbReference type="Pfam" id="PF00623">
    <property type="entry name" value="RNA_pol_Rpb1_2"/>
    <property type="match status" value="2"/>
</dbReference>
<dbReference type="Pfam" id="PF04983">
    <property type="entry name" value="RNA_pol_Rpb1_3"/>
    <property type="match status" value="1"/>
</dbReference>
<dbReference type="Pfam" id="PF05000">
    <property type="entry name" value="RNA_pol_Rpb1_4"/>
    <property type="match status" value="1"/>
</dbReference>
<dbReference type="Pfam" id="PF04998">
    <property type="entry name" value="RNA_pol_Rpb1_5"/>
    <property type="match status" value="1"/>
</dbReference>
<dbReference type="SMART" id="SM00663">
    <property type="entry name" value="RPOLA_N"/>
    <property type="match status" value="1"/>
</dbReference>
<dbReference type="SUPFAM" id="SSF64484">
    <property type="entry name" value="beta and beta-prime subunits of DNA dependent RNA-polymerase"/>
    <property type="match status" value="1"/>
</dbReference>
<evidence type="ECO:0000255" key="1">
    <source>
        <dbReference type="HAMAP-Rule" id="MF_01322"/>
    </source>
</evidence>
<name>RPOC_BACFR</name>
<gene>
    <name evidence="1" type="primary">rpoC</name>
    <name type="ordered locus">BF4191</name>
</gene>
<comment type="function">
    <text evidence="1">DNA-dependent RNA polymerase catalyzes the transcription of DNA into RNA using the four ribonucleoside triphosphates as substrates.</text>
</comment>
<comment type="catalytic activity">
    <reaction evidence="1">
        <text>RNA(n) + a ribonucleoside 5'-triphosphate = RNA(n+1) + diphosphate</text>
        <dbReference type="Rhea" id="RHEA:21248"/>
        <dbReference type="Rhea" id="RHEA-COMP:14527"/>
        <dbReference type="Rhea" id="RHEA-COMP:17342"/>
        <dbReference type="ChEBI" id="CHEBI:33019"/>
        <dbReference type="ChEBI" id="CHEBI:61557"/>
        <dbReference type="ChEBI" id="CHEBI:140395"/>
        <dbReference type="EC" id="2.7.7.6"/>
    </reaction>
</comment>
<comment type="cofactor">
    <cofactor evidence="1">
        <name>Mg(2+)</name>
        <dbReference type="ChEBI" id="CHEBI:18420"/>
    </cofactor>
    <text evidence="1">Binds 1 Mg(2+) ion per subunit.</text>
</comment>
<comment type="cofactor">
    <cofactor evidence="1">
        <name>Zn(2+)</name>
        <dbReference type="ChEBI" id="CHEBI:29105"/>
    </cofactor>
    <text evidence="1">Binds 2 Zn(2+) ions per subunit.</text>
</comment>
<comment type="subunit">
    <text evidence="1">The RNAP catalytic core consists of 2 alpha, 1 beta, 1 beta' and 1 omega subunit. When a sigma factor is associated with the core the holoenzyme is formed, which can initiate transcription.</text>
</comment>
<comment type="similarity">
    <text evidence="1">Belongs to the RNA polymerase beta' chain family.</text>
</comment>
<sequence length="1427" mass="158598">MAFRKENKIKSNFSKISIGLASPEEILENSSGEVLKPETINYRTYKPERDGLFCERIFGPIKDYECHCGKYKRIRYKGIVCDRCGVEVTEKKVRRERMGHIQLVVPVAHIWYFRSLPNKIGYLLGLPTKKLDSIIYYERYVVIQPGVKAEDGIAEFDLLSEEEYLDILDTLPKDNQYLEDTDPNKFIAKMGAEAIYDLLARLDLDALSYELRHRAGNDASQQRKNEALKRLQVVESFRASRGRNKPEWMIVRIVPVIPPELRPLVPLDGGRFATSDLNDLYRRVIIRNNRLKRLIEIKAPEVILRNEKRMLQESVDSLFDNSRKSSAVKTDANRPLKSLSDSLKGKQGRFRQNLLGKRVDYSARSVIVVGPELRMHECGIPKLMAAELYKPFIIRKLIERGIVKTVKSAKKIVDRKEPVIWDILEHVMKGHPVLLNRAPTLHRLGIQAFQPKMIEGKAIQLHPLACTAFNADFDGDQMAVHLPLSNEAVLEAQMLMLASHNILNPANGAPITVPSQDMVLGLYYITKLRKGAKGEGLTFYGPEEALIAYNEGKVDIHAPVKVIVKDLDENGNIVDVMRETSVGRVIVNEIVPPEVGYINTIISKKSLRDIISAVIKACGVARTADFLDGIKNLGYKMAFQGGLSFNLGDIIIPKEKETLVQRGYEEVEQVISNYNMGFITNNERYNQVIDIWTHVNSELSNILMKTISSDDQGFNSVYMMLDSGARGSKEQIRQLSGMRGLMAKPQKAGAEGGQIIENPILSNFKEGLSVLEYFISTHGARKGLADTALKTADAGYLTRRLVDVSHDVIINEEDCGTLRGLVCTDLKNNDEVIATLYERILGRVSVHDIIHPQTGELLVAGGEEITEDIAKKIQESPIESVEIRSVLTCESKKGVCAKCYGRNLATNHMVQKGEAVGVIAAQSIGEPGTQLTLRTFHAGGTAANIAANASIVAKNNARLEFEELRTVDIVDETGEAAKVVVGRLAEVRFIDVNTGIVLSTHNVPYGSTLYVADGEVVEKGKLIAKWDPFNAVIITEATGKIEFEGVIENVTYKIESDEATGLREIIIIESKDKTKVPSAHILTEDGDLIRTYNLPVGGHVVIENGQKVKAGEVIVKIPRAVGKAGDITGGLPRVTELFEARNPSNPAVVSEIDGEVTMGKVKRGNREIIVTSKTGEVKKYLVPLSKQILVQENDYVRAGTPLSDGATTPADILAIKGPTAVQEYIVNEVQDVYRLQGVKINDKHFEIIVRQMMRKVTIDEPGDTRFLEQQVVDKLEFMEENDRIWGKKVVVDAGDSENLKAGQIVTARKLRDENSMLKRRDLKPVEVRDAVAATSTQILQGITRAALQTSSFMSAASFQETTKVLNEAAINGKIDKLEGMKENVICGHLIPAGTGLREFDKIIVGSKEEYDRILANKKTVLDYNEVE</sequence>
<feature type="chain" id="PRO_0000067705" description="DNA-directed RNA polymerase subunit beta'">
    <location>
        <begin position="1"/>
        <end position="1427"/>
    </location>
</feature>
<feature type="binding site" evidence="1">
    <location>
        <position position="66"/>
    </location>
    <ligand>
        <name>Zn(2+)</name>
        <dbReference type="ChEBI" id="CHEBI:29105"/>
        <label>1</label>
    </ligand>
</feature>
<feature type="binding site" evidence="1">
    <location>
        <position position="68"/>
    </location>
    <ligand>
        <name>Zn(2+)</name>
        <dbReference type="ChEBI" id="CHEBI:29105"/>
        <label>1</label>
    </ligand>
</feature>
<feature type="binding site" evidence="1">
    <location>
        <position position="81"/>
    </location>
    <ligand>
        <name>Zn(2+)</name>
        <dbReference type="ChEBI" id="CHEBI:29105"/>
        <label>1</label>
    </ligand>
</feature>
<feature type="binding site" evidence="1">
    <location>
        <position position="84"/>
    </location>
    <ligand>
        <name>Zn(2+)</name>
        <dbReference type="ChEBI" id="CHEBI:29105"/>
        <label>1</label>
    </ligand>
</feature>
<feature type="binding site" evidence="1">
    <location>
        <position position="472"/>
    </location>
    <ligand>
        <name>Mg(2+)</name>
        <dbReference type="ChEBI" id="CHEBI:18420"/>
    </ligand>
</feature>
<feature type="binding site" evidence="1">
    <location>
        <position position="474"/>
    </location>
    <ligand>
        <name>Mg(2+)</name>
        <dbReference type="ChEBI" id="CHEBI:18420"/>
    </ligand>
</feature>
<feature type="binding site" evidence="1">
    <location>
        <position position="476"/>
    </location>
    <ligand>
        <name>Mg(2+)</name>
        <dbReference type="ChEBI" id="CHEBI:18420"/>
    </ligand>
</feature>
<feature type="binding site" evidence="1">
    <location>
        <position position="815"/>
    </location>
    <ligand>
        <name>Zn(2+)</name>
        <dbReference type="ChEBI" id="CHEBI:29105"/>
        <label>2</label>
    </ligand>
</feature>
<feature type="binding site" evidence="1">
    <location>
        <position position="889"/>
    </location>
    <ligand>
        <name>Zn(2+)</name>
        <dbReference type="ChEBI" id="CHEBI:29105"/>
        <label>2</label>
    </ligand>
</feature>
<feature type="binding site" evidence="1">
    <location>
        <position position="896"/>
    </location>
    <ligand>
        <name>Zn(2+)</name>
        <dbReference type="ChEBI" id="CHEBI:29105"/>
        <label>2</label>
    </ligand>
</feature>
<feature type="binding site" evidence="1">
    <location>
        <position position="899"/>
    </location>
    <ligand>
        <name>Zn(2+)</name>
        <dbReference type="ChEBI" id="CHEBI:29105"/>
        <label>2</label>
    </ligand>
</feature>
<protein>
    <recommendedName>
        <fullName evidence="1">DNA-directed RNA polymerase subunit beta'</fullName>
        <shortName evidence="1">RNAP subunit beta'</shortName>
        <ecNumber evidence="1">2.7.7.6</ecNumber>
    </recommendedName>
    <alternativeName>
        <fullName evidence="1">RNA polymerase subunit beta'</fullName>
    </alternativeName>
    <alternativeName>
        <fullName evidence="1">Transcriptase subunit beta'</fullName>
    </alternativeName>
</protein>